<organism>
    <name type="scientific">Arabidopsis thaliana</name>
    <name type="common">Mouse-ear cress</name>
    <dbReference type="NCBI Taxonomy" id="3702"/>
    <lineage>
        <taxon>Eukaryota</taxon>
        <taxon>Viridiplantae</taxon>
        <taxon>Streptophyta</taxon>
        <taxon>Embryophyta</taxon>
        <taxon>Tracheophyta</taxon>
        <taxon>Spermatophyta</taxon>
        <taxon>Magnoliopsida</taxon>
        <taxon>eudicotyledons</taxon>
        <taxon>Gunneridae</taxon>
        <taxon>Pentapetalae</taxon>
        <taxon>rosids</taxon>
        <taxon>malvids</taxon>
        <taxon>Brassicales</taxon>
        <taxon>Brassicaceae</taxon>
        <taxon>Camelineae</taxon>
        <taxon>Arabidopsis</taxon>
    </lineage>
</organism>
<protein>
    <recommendedName>
        <fullName>Probable beta-1,3-galactosyltransferase 13</fullName>
        <ecNumber>2.4.1.-</ecNumber>
    </recommendedName>
</protein>
<reference key="1">
    <citation type="journal article" date="2000" name="DNA Res.">
        <title>Structural analysis of Arabidopsis thaliana chromosome 3. II. Sequence features of the 4,251,695 bp regions covered by 90 P1, TAC and BAC clones.</title>
        <authorList>
            <person name="Kaneko T."/>
            <person name="Katoh T."/>
            <person name="Sato S."/>
            <person name="Nakamura Y."/>
            <person name="Asamizu E."/>
            <person name="Tabata S."/>
        </authorList>
    </citation>
    <scope>NUCLEOTIDE SEQUENCE [LARGE SCALE GENOMIC DNA]</scope>
    <source>
        <strain>cv. Columbia</strain>
    </source>
</reference>
<reference key="2">
    <citation type="journal article" date="2017" name="Plant J.">
        <title>Araport11: a complete reannotation of the Arabidopsis thaliana reference genome.</title>
        <authorList>
            <person name="Cheng C.Y."/>
            <person name="Krishnakumar V."/>
            <person name="Chan A.P."/>
            <person name="Thibaud-Nissen F."/>
            <person name="Schobel S."/>
            <person name="Town C.D."/>
        </authorList>
    </citation>
    <scope>GENOME REANNOTATION</scope>
    <source>
        <strain>cv. Columbia</strain>
    </source>
</reference>
<reference key="3">
    <citation type="journal article" date="2003" name="Science">
        <title>Empirical analysis of transcriptional activity in the Arabidopsis genome.</title>
        <authorList>
            <person name="Yamada K."/>
            <person name="Lim J."/>
            <person name="Dale J.M."/>
            <person name="Chen H."/>
            <person name="Shinn P."/>
            <person name="Palm C.J."/>
            <person name="Southwick A.M."/>
            <person name="Wu H.C."/>
            <person name="Kim C.J."/>
            <person name="Nguyen M."/>
            <person name="Pham P.K."/>
            <person name="Cheuk R.F."/>
            <person name="Karlin-Newmann G."/>
            <person name="Liu S.X."/>
            <person name="Lam B."/>
            <person name="Sakano H."/>
            <person name="Wu T."/>
            <person name="Yu G."/>
            <person name="Miranda M."/>
            <person name="Quach H.L."/>
            <person name="Tripp M."/>
            <person name="Chang C.H."/>
            <person name="Lee J.M."/>
            <person name="Toriumi M.J."/>
            <person name="Chan M.M."/>
            <person name="Tang C.C."/>
            <person name="Onodera C.S."/>
            <person name="Deng J.M."/>
            <person name="Akiyama K."/>
            <person name="Ansari Y."/>
            <person name="Arakawa T."/>
            <person name="Banh J."/>
            <person name="Banno F."/>
            <person name="Bowser L."/>
            <person name="Brooks S.Y."/>
            <person name="Carninci P."/>
            <person name="Chao Q."/>
            <person name="Choy N."/>
            <person name="Enju A."/>
            <person name="Goldsmith A.D."/>
            <person name="Gurjal M."/>
            <person name="Hansen N.F."/>
            <person name="Hayashizaki Y."/>
            <person name="Johnson-Hopson C."/>
            <person name="Hsuan V.W."/>
            <person name="Iida K."/>
            <person name="Karnes M."/>
            <person name="Khan S."/>
            <person name="Koesema E."/>
            <person name="Ishida J."/>
            <person name="Jiang P.X."/>
            <person name="Jones T."/>
            <person name="Kawai J."/>
            <person name="Kamiya A."/>
            <person name="Meyers C."/>
            <person name="Nakajima M."/>
            <person name="Narusaka M."/>
            <person name="Seki M."/>
            <person name="Sakurai T."/>
            <person name="Satou M."/>
            <person name="Tamse R."/>
            <person name="Vaysberg M."/>
            <person name="Wallender E.K."/>
            <person name="Wong C."/>
            <person name="Yamamura Y."/>
            <person name="Yuan S."/>
            <person name="Shinozaki K."/>
            <person name="Davis R.W."/>
            <person name="Theologis A."/>
            <person name="Ecker J.R."/>
        </authorList>
    </citation>
    <scope>NUCLEOTIDE SEQUENCE [LARGE SCALE MRNA]</scope>
    <source>
        <strain>cv. Columbia</strain>
    </source>
</reference>
<reference key="4">
    <citation type="journal article" date="2008" name="Plant Mol. Biol.">
        <title>Identification of a novel group of putative Arabidopsis thaliana beta-(1,3)-galactosyltransferases.</title>
        <authorList>
            <person name="Qu Y."/>
            <person name="Egelund J."/>
            <person name="Gilson P.R."/>
            <person name="Houghton F."/>
            <person name="Gleeson P.A."/>
            <person name="Schultz C.J."/>
            <person name="Bacic A."/>
        </authorList>
    </citation>
    <scope>GENE FAMILY</scope>
    <scope>NOMENCLATURE</scope>
</reference>
<accession>Q9LKA9</accession>
<comment type="function">
    <text evidence="1">Beta-1,3-galactosyltransferase that transfers galactose from UDP-galactose to substrates with a terminal glycosyl residue.</text>
</comment>
<comment type="cofactor">
    <cofactor evidence="1">
        <name>Mn(2+)</name>
        <dbReference type="ChEBI" id="CHEBI:29035"/>
    </cofactor>
</comment>
<comment type="pathway">
    <text>Protein modification; protein glycosylation.</text>
</comment>
<comment type="subcellular location">
    <subcellularLocation>
        <location evidence="3">Golgi apparatus membrane</location>
        <topology evidence="3">Single-pass type II membrane protein</topology>
    </subcellularLocation>
</comment>
<comment type="similarity">
    <text evidence="3">Belongs to the glycosyltransferase 31 family.</text>
</comment>
<gene>
    <name type="primary">B3GALT13</name>
    <name type="ordered locus">At3g14960</name>
    <name type="ORF">K15M2.10</name>
</gene>
<dbReference type="EC" id="2.4.1.-"/>
<dbReference type="EMBL" id="AP000370">
    <property type="protein sequence ID" value="BAA97059.1"/>
    <property type="molecule type" value="Genomic_DNA"/>
</dbReference>
<dbReference type="EMBL" id="CP002686">
    <property type="protein sequence ID" value="AEE75594.1"/>
    <property type="molecule type" value="Genomic_DNA"/>
</dbReference>
<dbReference type="EMBL" id="AY070398">
    <property type="protein sequence ID" value="AAL49894.1"/>
    <property type="molecule type" value="mRNA"/>
</dbReference>
<dbReference type="EMBL" id="AY133728">
    <property type="protein sequence ID" value="AAM91662.1"/>
    <property type="molecule type" value="mRNA"/>
</dbReference>
<dbReference type="RefSeq" id="NP_188114.1">
    <property type="nucleotide sequence ID" value="NM_112358.4"/>
</dbReference>
<dbReference type="SMR" id="Q9LKA9"/>
<dbReference type="FunCoup" id="Q9LKA9">
    <property type="interactions" value="2295"/>
</dbReference>
<dbReference type="STRING" id="3702.Q9LKA9"/>
<dbReference type="CAZy" id="GT31">
    <property type="family name" value="Glycosyltransferase Family 31"/>
</dbReference>
<dbReference type="GlyCosmos" id="Q9LKA9">
    <property type="glycosylation" value="1 site, No reported glycans"/>
</dbReference>
<dbReference type="GlyGen" id="Q9LKA9">
    <property type="glycosylation" value="1 site"/>
</dbReference>
<dbReference type="iPTMnet" id="Q9LKA9"/>
<dbReference type="PaxDb" id="3702-AT3G14960.1"/>
<dbReference type="ProteomicsDB" id="240961"/>
<dbReference type="EnsemblPlants" id="AT3G14960.1">
    <property type="protein sequence ID" value="AT3G14960.1"/>
    <property type="gene ID" value="AT3G14960"/>
</dbReference>
<dbReference type="GeneID" id="820725"/>
<dbReference type="Gramene" id="AT3G14960.1">
    <property type="protein sequence ID" value="AT3G14960.1"/>
    <property type="gene ID" value="AT3G14960"/>
</dbReference>
<dbReference type="KEGG" id="ath:AT3G14960"/>
<dbReference type="Araport" id="AT3G14960"/>
<dbReference type="TAIR" id="AT3G14960"/>
<dbReference type="eggNOG" id="KOG2288">
    <property type="taxonomic scope" value="Eukaryota"/>
</dbReference>
<dbReference type="HOGENOM" id="CLU_040730_0_0_1"/>
<dbReference type="InParanoid" id="Q9LKA9"/>
<dbReference type="OMA" id="EPECSPY"/>
<dbReference type="PhylomeDB" id="Q9LKA9"/>
<dbReference type="UniPathway" id="UPA00378"/>
<dbReference type="PRO" id="PR:Q9LKA9"/>
<dbReference type="Proteomes" id="UP000006548">
    <property type="component" value="Chromosome 3"/>
</dbReference>
<dbReference type="ExpressionAtlas" id="Q9LKA9">
    <property type="expression patterns" value="baseline and differential"/>
</dbReference>
<dbReference type="GO" id="GO:0005794">
    <property type="term" value="C:Golgi apparatus"/>
    <property type="evidence" value="ECO:0007005"/>
    <property type="project" value="TAIR"/>
</dbReference>
<dbReference type="GO" id="GO:0000139">
    <property type="term" value="C:Golgi membrane"/>
    <property type="evidence" value="ECO:0007669"/>
    <property type="project" value="UniProtKB-SubCell"/>
</dbReference>
<dbReference type="GO" id="GO:0016758">
    <property type="term" value="F:hexosyltransferase activity"/>
    <property type="evidence" value="ECO:0007669"/>
    <property type="project" value="InterPro"/>
</dbReference>
<dbReference type="GO" id="GO:0006486">
    <property type="term" value="P:protein glycosylation"/>
    <property type="evidence" value="ECO:0007669"/>
    <property type="project" value="UniProtKB-UniPathway"/>
</dbReference>
<dbReference type="FunFam" id="3.90.550.50:FF:000012">
    <property type="entry name" value="Hexosyltransferase"/>
    <property type="match status" value="1"/>
</dbReference>
<dbReference type="Gene3D" id="3.90.550.50">
    <property type="match status" value="1"/>
</dbReference>
<dbReference type="InterPro" id="IPR002659">
    <property type="entry name" value="Glyco_trans_31"/>
</dbReference>
<dbReference type="PANTHER" id="PTHR11214:SF290">
    <property type="entry name" value="BETA-1,3-GALACTOSYLTRANSFERASE 13-RELATED"/>
    <property type="match status" value="1"/>
</dbReference>
<dbReference type="PANTHER" id="PTHR11214">
    <property type="entry name" value="BETA-1,3-N-ACETYLGLUCOSAMINYLTRANSFERASE"/>
    <property type="match status" value="1"/>
</dbReference>
<dbReference type="Pfam" id="PF01762">
    <property type="entry name" value="Galactosyl_T"/>
    <property type="match status" value="1"/>
</dbReference>
<keyword id="KW-0325">Glycoprotein</keyword>
<keyword id="KW-0328">Glycosyltransferase</keyword>
<keyword id="KW-0333">Golgi apparatus</keyword>
<keyword id="KW-0464">Manganese</keyword>
<keyword id="KW-0472">Membrane</keyword>
<keyword id="KW-1185">Reference proteome</keyword>
<keyword id="KW-0735">Signal-anchor</keyword>
<keyword id="KW-0808">Transferase</keyword>
<keyword id="KW-0812">Transmembrane</keyword>
<keyword id="KW-1133">Transmembrane helix</keyword>
<feature type="chain" id="PRO_0000359423" description="Probable beta-1,3-galactosyltransferase 13">
    <location>
        <begin position="1"/>
        <end position="343"/>
    </location>
</feature>
<feature type="transmembrane region" description="Helical; Signal-anchor for type II membrane protein" evidence="2">
    <location>
        <begin position="22"/>
        <end position="42"/>
    </location>
</feature>
<feature type="glycosylation site" description="N-linked (GlcNAc...) asparagine" evidence="2">
    <location>
        <position position="265"/>
    </location>
</feature>
<name>B3GTD_ARATH</name>
<sequence>MSSSPKLFHARPSFFTRRSTPLIVFTSLAIGLTGFLFGLSTILFPGLRLSGRSCLTNLPPKTVKIVWDVAGNSIVNGEVKRHKVMGFVGIQTGFRSAGRRRALRNTWMPSDPEGLRRLEESTGLAIRFIIGKTKDEAKMVELRSEVAMYDDFILLDIEEEYSKLPYKTLAFFKAAYALYDSEFYVKADDDIYLRPDRLSLLLAKERGHSQTYLGCMKKGPVFTDPKLKWYEPLADLLGKEYFLHAYGPIYALSADVVTSLVALKNNSFRMFSNEDVTIGAWMLAMNVNHENLHTLCEPECSPYSIAVWDIPKCSGLCNPEKRMLELHMLESCSKSPTLPSDDE</sequence>
<proteinExistence type="evidence at transcript level"/>
<evidence type="ECO:0000250" key="1"/>
<evidence type="ECO:0000255" key="2"/>
<evidence type="ECO:0000305" key="3"/>